<protein>
    <recommendedName>
        <fullName evidence="4 9">Immunoglobulin heavy variable 5-51</fullName>
    </recommendedName>
</protein>
<dbReference type="EMBL" id="AC244452">
    <property type="status" value="NOT_ANNOTATED_CDS"/>
    <property type="molecule type" value="Genomic_DNA"/>
</dbReference>
<dbReference type="SMR" id="A0A0C4DH38"/>
<dbReference type="FunCoup" id="A0A0C4DH38">
    <property type="interactions" value="263"/>
</dbReference>
<dbReference type="IMGT_GENE-DB" id="IGHV5-51"/>
<dbReference type="BioMuta" id="IGHV5-51"/>
<dbReference type="jPOST" id="A0A0C4DH38"/>
<dbReference type="MassIVE" id="A0A0C4DH38"/>
<dbReference type="Ensembl" id="ENST00000390626.2">
    <property type="protein sequence ID" value="ENSP00000375035.2"/>
    <property type="gene ID" value="ENSG00000211966.2"/>
</dbReference>
<dbReference type="Ensembl" id="ENST00000620764.2">
    <property type="protein sequence ID" value="ENSP00000483207.2"/>
    <property type="gene ID" value="ENSG00000277574.2"/>
</dbReference>
<dbReference type="AGR" id="HGNC:5659"/>
<dbReference type="GeneCards" id="IGHV5-51"/>
<dbReference type="HGNC" id="HGNC:5659">
    <property type="gene designation" value="IGHV5-51"/>
</dbReference>
<dbReference type="HPA" id="ENSG00000211966">
    <property type="expression patterns" value="Tissue enriched (urinary)"/>
</dbReference>
<dbReference type="neXtProt" id="NX_A0A0C4DH38"/>
<dbReference type="OpenTargets" id="ENSG00000211966"/>
<dbReference type="VEuPathDB" id="HostDB:ENSG00000211966"/>
<dbReference type="GeneTree" id="ENSGT00950000183013"/>
<dbReference type="HOGENOM" id="CLU_077975_5_2_1"/>
<dbReference type="InParanoid" id="A0A0C4DH38"/>
<dbReference type="OMA" id="GMIYPSD"/>
<dbReference type="OrthoDB" id="9901223at2759"/>
<dbReference type="PAN-GO" id="A0A0C4DH38">
    <property type="GO annotations" value="11 GO annotations based on evolutionary models"/>
</dbReference>
<dbReference type="PhylomeDB" id="A0A0C4DH38"/>
<dbReference type="ChiTaRS" id="IGHV5-51">
    <property type="organism name" value="human"/>
</dbReference>
<dbReference type="Pharos" id="A0A0C4DH38">
    <property type="development level" value="Tdark"/>
</dbReference>
<dbReference type="PRO" id="PR:A0A0C4DH38"/>
<dbReference type="Proteomes" id="UP000005640">
    <property type="component" value="Chromosome 14"/>
</dbReference>
<dbReference type="RNAct" id="A0A0C4DH38">
    <property type="molecule type" value="protein"/>
</dbReference>
<dbReference type="Bgee" id="ENSG00000211966">
    <property type="expression patterns" value="Expressed in rectum and 102 other cell types or tissues"/>
</dbReference>
<dbReference type="GO" id="GO:0005576">
    <property type="term" value="C:extracellular region"/>
    <property type="evidence" value="ECO:0007669"/>
    <property type="project" value="UniProtKB-SubCell"/>
</dbReference>
<dbReference type="GO" id="GO:0019814">
    <property type="term" value="C:immunoglobulin complex"/>
    <property type="evidence" value="ECO:0007669"/>
    <property type="project" value="UniProtKB-KW"/>
</dbReference>
<dbReference type="GO" id="GO:0005886">
    <property type="term" value="C:plasma membrane"/>
    <property type="evidence" value="ECO:0007669"/>
    <property type="project" value="UniProtKB-SubCell"/>
</dbReference>
<dbReference type="GO" id="GO:0003823">
    <property type="term" value="F:antigen binding"/>
    <property type="evidence" value="ECO:0000318"/>
    <property type="project" value="GO_Central"/>
</dbReference>
<dbReference type="GO" id="GO:0016064">
    <property type="term" value="P:immunoglobulin mediated immune response"/>
    <property type="evidence" value="ECO:0000318"/>
    <property type="project" value="GO_Central"/>
</dbReference>
<dbReference type="CDD" id="cd04981">
    <property type="entry name" value="IgV_H"/>
    <property type="match status" value="1"/>
</dbReference>
<dbReference type="FunFam" id="2.60.40.10:FF:001072">
    <property type="entry name" value="Immunoglobulin heavy variable V1-24"/>
    <property type="match status" value="1"/>
</dbReference>
<dbReference type="Gene3D" id="2.60.40.10">
    <property type="entry name" value="Immunoglobulins"/>
    <property type="match status" value="1"/>
</dbReference>
<dbReference type="InterPro" id="IPR007110">
    <property type="entry name" value="Ig-like_dom"/>
</dbReference>
<dbReference type="InterPro" id="IPR036179">
    <property type="entry name" value="Ig-like_dom_sf"/>
</dbReference>
<dbReference type="InterPro" id="IPR013783">
    <property type="entry name" value="Ig-like_fold"/>
</dbReference>
<dbReference type="InterPro" id="IPR013106">
    <property type="entry name" value="Ig_V-set"/>
</dbReference>
<dbReference type="InterPro" id="IPR050199">
    <property type="entry name" value="IgHV"/>
</dbReference>
<dbReference type="PANTHER" id="PTHR23266">
    <property type="entry name" value="IMMUNOGLOBULIN HEAVY CHAIN"/>
    <property type="match status" value="1"/>
</dbReference>
<dbReference type="Pfam" id="PF07686">
    <property type="entry name" value="V-set"/>
    <property type="match status" value="1"/>
</dbReference>
<dbReference type="SMART" id="SM00406">
    <property type="entry name" value="IGv"/>
    <property type="match status" value="1"/>
</dbReference>
<dbReference type="SUPFAM" id="SSF48726">
    <property type="entry name" value="Immunoglobulin"/>
    <property type="match status" value="1"/>
</dbReference>
<dbReference type="PROSITE" id="PS50835">
    <property type="entry name" value="IG_LIKE"/>
    <property type="match status" value="1"/>
</dbReference>
<name>HV551_HUMAN</name>
<organism>
    <name type="scientific">Homo sapiens</name>
    <name type="common">Human</name>
    <dbReference type="NCBI Taxonomy" id="9606"/>
    <lineage>
        <taxon>Eukaryota</taxon>
        <taxon>Metazoa</taxon>
        <taxon>Chordata</taxon>
        <taxon>Craniata</taxon>
        <taxon>Vertebrata</taxon>
        <taxon>Euteleostomi</taxon>
        <taxon>Mammalia</taxon>
        <taxon>Eutheria</taxon>
        <taxon>Euarchontoglires</taxon>
        <taxon>Primates</taxon>
        <taxon>Haplorrhini</taxon>
        <taxon>Catarrhini</taxon>
        <taxon>Hominidae</taxon>
        <taxon>Homo</taxon>
    </lineage>
</organism>
<evidence type="ECO:0000250" key="1">
    <source>
        <dbReference type="UniProtKB" id="P23083"/>
    </source>
</evidence>
<evidence type="ECO:0000255" key="2"/>
<evidence type="ECO:0000255" key="3">
    <source>
        <dbReference type="PROSITE-ProRule" id="PRU00114"/>
    </source>
</evidence>
<evidence type="ECO:0000303" key="4">
    <source>
    </source>
</evidence>
<evidence type="ECO:0000303" key="5">
    <source>
    </source>
</evidence>
<evidence type="ECO:0000303" key="6">
    <source>
    </source>
</evidence>
<evidence type="ECO:0000303" key="7">
    <source>
    </source>
</evidence>
<evidence type="ECO:0000303" key="8">
    <source>
    </source>
</evidence>
<evidence type="ECO:0000303" key="9">
    <source ref="3"/>
</evidence>
<evidence type="ECO:0000305" key="10"/>
<keyword id="KW-1064">Adaptive immunity</keyword>
<keyword id="KW-1003">Cell membrane</keyword>
<keyword id="KW-1015">Disulfide bond</keyword>
<keyword id="KW-0391">Immunity</keyword>
<keyword id="KW-1280">Immunoglobulin</keyword>
<keyword id="KW-0393">Immunoglobulin domain</keyword>
<keyword id="KW-0472">Membrane</keyword>
<keyword id="KW-1267">Proteomics identification</keyword>
<keyword id="KW-1185">Reference proteome</keyword>
<keyword id="KW-0964">Secreted</keyword>
<keyword id="KW-0732">Signal</keyword>
<comment type="function">
    <text evidence="5 6 7 8">V region of the variable domain of immunoglobulin heavy chains that participates in the antigen recognition (PubMed:24600447). Immunoglobulins, also known as antibodies, are membrane-bound or secreted glycoproteins produced by B lymphocytes. In the recognition phase of humoral immunity, the membrane-bound immunoglobulins serve as receptors which, upon binding of a specific antigen, trigger the clonal expansion and differentiation of B lymphocytes into immunoglobulins-secreting plasma cells. Secreted immunoglobulins mediate the effector phase of humoral immunity, which results in the elimination of bound antigens (PubMed:20176268, PubMed:22158414). The antigen binding site is formed by the variable domain of one heavy chain, together with that of its associated light chain. Thus, each immunoglobulin has two antigen binding sites with remarkable affinity for a particular antigen. The variable domains are assembled by a process called V-(D)-J rearrangement and can then be subjected to somatic hypermutations which, after exposure to antigen and selection, allow affinity maturation for a particular antigen (PubMed:17576170, PubMed:20176268).</text>
</comment>
<comment type="subunit">
    <text evidence="6">Immunoglobulins are composed of two identical heavy chains and two identical light chains; disulfide-linked.</text>
</comment>
<comment type="subcellular location">
    <subcellularLocation>
        <location evidence="6 7">Secreted</location>
    </subcellularLocation>
    <subcellularLocation>
        <location evidence="6 7">Cell membrane</location>
    </subcellularLocation>
</comment>
<comment type="polymorphism">
    <text evidence="10">There are several alleles. The sequence shown is that of IMGT allele IGHV5-51*01.</text>
</comment>
<comment type="caution">
    <text evidence="10">For examples of full-length immunoglobulin heavy chains (of different isotypes) see AC P0DOX2, AC P0DOX3, AC P0DOX4, AC P0DOX5 and AC P0DOX6.</text>
</comment>
<sequence>MGSTAILALLLAVLQGVCAEVQLVQSGAEVKKPGESLKISCKGSGYSFTSYWIGWVRQMPGKGLEWMGIIYPGDSDTRYSPSFQGQVTISADKSISTAYLQWSSLKASDTAMYYCAR</sequence>
<feature type="signal peptide" evidence="2">
    <location>
        <begin position="1"/>
        <end position="19"/>
    </location>
</feature>
<feature type="chain" id="PRO_5007392448" description="Immunoglobulin heavy variable 5-51" evidence="2">
    <location>
        <begin position="20"/>
        <end position="117"/>
    </location>
</feature>
<feature type="domain" description="Ig-like" evidence="3">
    <location>
        <begin position="20"/>
        <end position="117" status="greater than"/>
    </location>
</feature>
<feature type="region of interest" description="Framework-1" evidence="1">
    <location>
        <begin position="20"/>
        <end position="44"/>
    </location>
</feature>
<feature type="region of interest" description="Complementarity-determining-1" evidence="1">
    <location>
        <begin position="45"/>
        <end position="52"/>
    </location>
</feature>
<feature type="region of interest" description="Framework-2" evidence="1">
    <location>
        <begin position="53"/>
        <end position="69"/>
    </location>
</feature>
<feature type="region of interest" description="Complementarity-determining-2" evidence="1">
    <location>
        <begin position="70"/>
        <end position="77"/>
    </location>
</feature>
<feature type="region of interest" description="Framework-3" evidence="1">
    <location>
        <begin position="78"/>
        <end position="115"/>
    </location>
</feature>
<feature type="region of interest" description="Complementarity-determining-3" evidence="1">
    <location>
        <begin position="116"/>
        <end position="117" status="greater than"/>
    </location>
</feature>
<feature type="disulfide bond" evidence="3">
    <location>
        <begin position="41"/>
        <end position="115"/>
    </location>
</feature>
<feature type="non-terminal residue">
    <location>
        <position position="117"/>
    </location>
</feature>
<reference key="1">
    <citation type="journal article" date="2003" name="Nature">
        <title>The DNA sequence and analysis of human chromosome 14.</title>
        <authorList>
            <person name="Heilig R."/>
            <person name="Eckenberg R."/>
            <person name="Petit J.-L."/>
            <person name="Fonknechten N."/>
            <person name="Da Silva C."/>
            <person name="Cattolico L."/>
            <person name="Levy M."/>
            <person name="Barbe V."/>
            <person name="De Berardinis V."/>
            <person name="Ureta-Vidal A."/>
            <person name="Pelletier E."/>
            <person name="Vico V."/>
            <person name="Anthouard V."/>
            <person name="Rowen L."/>
            <person name="Madan A."/>
            <person name="Qin S."/>
            <person name="Sun H."/>
            <person name="Du H."/>
            <person name="Pepin K."/>
            <person name="Artiguenave F."/>
            <person name="Robert C."/>
            <person name="Cruaud C."/>
            <person name="Bruels T."/>
            <person name="Jaillon O."/>
            <person name="Friedlander L."/>
            <person name="Samson G."/>
            <person name="Brottier P."/>
            <person name="Cure S."/>
            <person name="Segurens B."/>
            <person name="Aniere F."/>
            <person name="Samain S."/>
            <person name="Crespeau H."/>
            <person name="Abbasi N."/>
            <person name="Aiach N."/>
            <person name="Boscus D."/>
            <person name="Dickhoff R."/>
            <person name="Dors M."/>
            <person name="Dubois I."/>
            <person name="Friedman C."/>
            <person name="Gouyvenoux M."/>
            <person name="James R."/>
            <person name="Madan A."/>
            <person name="Mairey-Estrada B."/>
            <person name="Mangenot S."/>
            <person name="Martins N."/>
            <person name="Menard M."/>
            <person name="Oztas S."/>
            <person name="Ratcliffe A."/>
            <person name="Shaffer T."/>
            <person name="Trask B."/>
            <person name="Vacherie B."/>
            <person name="Bellemere C."/>
            <person name="Belser C."/>
            <person name="Besnard-Gonnet M."/>
            <person name="Bartol-Mavel D."/>
            <person name="Boutard M."/>
            <person name="Briez-Silla S."/>
            <person name="Combette S."/>
            <person name="Dufosse-Laurent V."/>
            <person name="Ferron C."/>
            <person name="Lechaplais C."/>
            <person name="Louesse C."/>
            <person name="Muselet D."/>
            <person name="Magdelenat G."/>
            <person name="Pateau E."/>
            <person name="Petit E."/>
            <person name="Sirvain-Trukniewicz P."/>
            <person name="Trybou A."/>
            <person name="Vega-Czarny N."/>
            <person name="Bataille E."/>
            <person name="Bluet E."/>
            <person name="Bordelais I."/>
            <person name="Dubois M."/>
            <person name="Dumont C."/>
            <person name="Guerin T."/>
            <person name="Haffray S."/>
            <person name="Hammadi R."/>
            <person name="Muanga J."/>
            <person name="Pellouin V."/>
            <person name="Robert D."/>
            <person name="Wunderle E."/>
            <person name="Gauguet G."/>
            <person name="Roy A."/>
            <person name="Sainte-Marthe L."/>
            <person name="Verdier J."/>
            <person name="Verdier-Discala C."/>
            <person name="Hillier L.W."/>
            <person name="Fulton L."/>
            <person name="McPherson J."/>
            <person name="Matsuda F."/>
            <person name="Wilson R."/>
            <person name="Scarpelli C."/>
            <person name="Gyapay G."/>
            <person name="Wincker P."/>
            <person name="Saurin W."/>
            <person name="Quetier F."/>
            <person name="Waterston R."/>
            <person name="Hood L."/>
            <person name="Weissenbach J."/>
        </authorList>
    </citation>
    <scope>NUCLEOTIDE SEQUENCE [LARGE SCALE GENOMIC DNA] (IMGT ALLELE IGHV5-51*01)</scope>
</reference>
<reference key="2">
    <citation type="journal article" date="2001" name="Exp. Clin. Immunogenet.">
        <title>Nomenclature of the human immunoglobulin heavy (IGH) genes.</title>
        <authorList>
            <person name="Lefranc M.P."/>
        </authorList>
    </citation>
    <scope>NOMENCLATURE</scope>
</reference>
<reference key="3">
    <citation type="book" date="2001" name="The Immunoglobulin FactsBook.">
        <title>The Immunoglobulin FactsBook.</title>
        <editorList>
            <person name="Lefranc M.P."/>
            <person name="Lefranc G."/>
        </editorList>
        <authorList>
            <person name="Lefranc M.P."/>
            <person name="Lefranc G."/>
        </authorList>
    </citation>
    <scope>NOMENCLATURE</scope>
</reference>
<reference key="4">
    <citation type="journal article" date="2007" name="Annu. Rev. Genet.">
        <title>Immunoglobulin somatic hypermutation.</title>
        <authorList>
            <person name="Teng G."/>
            <person name="Papavasiliou F.N."/>
        </authorList>
    </citation>
    <scope>REVIEW ON SOMATIC HYPERMUTATION</scope>
</reference>
<reference key="5">
    <citation type="journal article" date="2010" name="J. Allergy Clin. Immunol.">
        <title>Structure and function of immunoglobulins.</title>
        <authorList>
            <person name="Schroeder H.W. Jr."/>
            <person name="Cavacini L."/>
        </authorList>
    </citation>
    <scope>REVIEW ON IMMUNOGLOBULINS</scope>
</reference>
<reference key="6">
    <citation type="journal article" date="2012" name="Nat. Rev. Immunol.">
        <title>Molecular programming of B cell memory.</title>
        <authorList>
            <person name="McHeyzer-Williams M."/>
            <person name="Okitsu S."/>
            <person name="Wang N."/>
            <person name="McHeyzer-Williams L."/>
        </authorList>
    </citation>
    <scope>REVIEW ON FUNCTION</scope>
</reference>
<reference key="7">
    <citation type="journal article" date="2014" name="Front. Immunol.">
        <title>Immunoglobulin and T Cell Receptor Genes: IMGT((R)) and the Birth and Rise of Immunoinformatics.</title>
        <authorList>
            <person name="Lefranc M.P."/>
        </authorList>
    </citation>
    <scope>NOMENCLATURE</scope>
</reference>
<proteinExistence type="evidence at protein level"/>
<gene>
    <name evidence="4 9" type="primary">IGHV5-51</name>
</gene>
<accession>A0A0C4DH38</accession>
<accession>A0A0G2JP91</accession>